<organism>
    <name type="scientific">Caenorhabditis elegans</name>
    <dbReference type="NCBI Taxonomy" id="6239"/>
    <lineage>
        <taxon>Eukaryota</taxon>
        <taxon>Metazoa</taxon>
        <taxon>Ecdysozoa</taxon>
        <taxon>Nematoda</taxon>
        <taxon>Chromadorea</taxon>
        <taxon>Rhabditida</taxon>
        <taxon>Rhabditina</taxon>
        <taxon>Rhabditomorpha</taxon>
        <taxon>Rhabditoidea</taxon>
        <taxon>Rhabditidae</taxon>
        <taxon>Peloderinae</taxon>
        <taxon>Caenorhabditis</taxon>
    </lineage>
</organism>
<reference key="1">
    <citation type="journal article" date="1998" name="Science">
        <title>Genome sequence of the nematode C. elegans: a platform for investigating biology.</title>
        <authorList>
            <consortium name="The C. elegans sequencing consortium"/>
        </authorList>
    </citation>
    <scope>NUCLEOTIDE SEQUENCE [LARGE SCALE GENOMIC DNA]</scope>
    <source>
        <strain>Bristol N2</strain>
    </source>
</reference>
<feature type="chain" id="PRO_0000221144" description="Dolichyl-diphosphooligosaccharide--protein glycosyltransferase subunit TMEM258">
    <location>
        <begin position="1"/>
        <end position="79"/>
    </location>
</feature>
<feature type="transmembrane region" description="Helical" evidence="2">
    <location>
        <begin position="19"/>
        <end position="39"/>
    </location>
</feature>
<feature type="transmembrane region" description="Helical" evidence="2">
    <location>
        <begin position="55"/>
        <end position="75"/>
    </location>
</feature>
<dbReference type="EMBL" id="BX284605">
    <property type="protein sequence ID" value="CCD74331.1"/>
    <property type="molecule type" value="Genomic_DNA"/>
</dbReference>
<dbReference type="RefSeq" id="NP_504794.1">
    <property type="nucleotide sequence ID" value="NM_072393.7"/>
</dbReference>
<dbReference type="SMR" id="Q965T1"/>
<dbReference type="FunCoup" id="Q965T1">
    <property type="interactions" value="1026"/>
</dbReference>
<dbReference type="STRING" id="6239.Y57E12AM.1.1"/>
<dbReference type="PaxDb" id="6239-Y57E12AM.1"/>
<dbReference type="EnsemblMetazoa" id="Y57E12AM.1.1">
    <property type="protein sequence ID" value="Y57E12AM.1.1"/>
    <property type="gene ID" value="WBGene00021960"/>
</dbReference>
<dbReference type="GeneID" id="179094"/>
<dbReference type="KEGG" id="cel:CELE_Y57E12AM.1"/>
<dbReference type="UCSC" id="Y57E12AM.1.1">
    <property type="organism name" value="c. elegans"/>
</dbReference>
<dbReference type="AGR" id="WB:WBGene00021960"/>
<dbReference type="CTD" id="179094"/>
<dbReference type="WormBase" id="Y57E12AM.1">
    <property type="protein sequence ID" value="CE26193"/>
    <property type="gene ID" value="WBGene00021960"/>
    <property type="gene designation" value="tmem-258"/>
</dbReference>
<dbReference type="eggNOG" id="KOG4452">
    <property type="taxonomic scope" value="Eukaryota"/>
</dbReference>
<dbReference type="GeneTree" id="ENSGT00390000010089"/>
<dbReference type="HOGENOM" id="CLU_180449_0_0_1"/>
<dbReference type="InParanoid" id="Q965T1"/>
<dbReference type="OMA" id="MERYVGP"/>
<dbReference type="OrthoDB" id="18408at2759"/>
<dbReference type="PhylomeDB" id="Q965T1"/>
<dbReference type="UniPathway" id="UPA00378"/>
<dbReference type="PRO" id="PR:Q965T1"/>
<dbReference type="Proteomes" id="UP000001940">
    <property type="component" value="Chromosome V"/>
</dbReference>
<dbReference type="Bgee" id="WBGene00021960">
    <property type="expression patterns" value="Expressed in pharyngeal muscle cell (C elegans) and 4 other cell types or tissues"/>
</dbReference>
<dbReference type="GO" id="GO:0005737">
    <property type="term" value="C:cytoplasm"/>
    <property type="evidence" value="ECO:0000250"/>
    <property type="project" value="UniProtKB"/>
</dbReference>
<dbReference type="GO" id="GO:0005789">
    <property type="term" value="C:endoplasmic reticulum membrane"/>
    <property type="evidence" value="ECO:0000318"/>
    <property type="project" value="GO_Central"/>
</dbReference>
<dbReference type="GO" id="GO:0016020">
    <property type="term" value="C:membrane"/>
    <property type="evidence" value="ECO:0000250"/>
    <property type="project" value="UniProtKB"/>
</dbReference>
<dbReference type="GO" id="GO:0008250">
    <property type="term" value="C:oligosaccharyltransferase complex"/>
    <property type="evidence" value="ECO:0007669"/>
    <property type="project" value="InterPro"/>
</dbReference>
<dbReference type="GO" id="GO:0062062">
    <property type="term" value="F:oligosaccharyltransferase complex binding"/>
    <property type="evidence" value="ECO:0000318"/>
    <property type="project" value="GO_Central"/>
</dbReference>
<dbReference type="GO" id="GO:0006486">
    <property type="term" value="P:protein glycosylation"/>
    <property type="evidence" value="ECO:0007669"/>
    <property type="project" value="UniProtKB-UniPathway"/>
</dbReference>
<dbReference type="GO" id="GO:0034976">
    <property type="term" value="P:response to endoplasmic reticulum stress"/>
    <property type="evidence" value="ECO:0000318"/>
    <property type="project" value="GO_Central"/>
</dbReference>
<dbReference type="InterPro" id="IPR007915">
    <property type="entry name" value="TMEM258/Ost5"/>
</dbReference>
<dbReference type="PANTHER" id="PTHR13636">
    <property type="entry name" value="TRANSMEMBRANE PROTEIN 258"/>
    <property type="match status" value="1"/>
</dbReference>
<dbReference type="Pfam" id="PF05251">
    <property type="entry name" value="Ost5"/>
    <property type="match status" value="1"/>
</dbReference>
<accession>Q965T1</accession>
<evidence type="ECO:0000250" key="1">
    <source>
        <dbReference type="UniProtKB" id="P61165"/>
    </source>
</evidence>
<evidence type="ECO:0000255" key="2"/>
<evidence type="ECO:0000305" key="3"/>
<evidence type="ECO:0000312" key="4">
    <source>
        <dbReference type="WormBase" id="Y57E12AM.1"/>
    </source>
</evidence>
<keyword id="KW-0472">Membrane</keyword>
<keyword id="KW-1185">Reference proteome</keyword>
<keyword id="KW-0812">Transmembrane</keyword>
<keyword id="KW-1133">Transmembrane helix</keyword>
<sequence>MDISKMNRYTAPVNFASLPLLTTFLCGVGLLLLATFTMIQVTSTKYNRNLLKELFIAATSSVFLGFGSVFLLLWVGIYV</sequence>
<gene>
    <name evidence="4" type="primary">tmem-258</name>
    <name evidence="4" type="ORF">Y57E12AM.1</name>
</gene>
<comment type="function">
    <text evidence="1">Subunit of the oligosaccharyl transferase (OST) complex that catalyzes the initial transfer of a defined glycan (Glc(3)Man(9)GlcNAc(2) in eukaryotes) from the lipid carrier dolichol-pyrophosphate to an asparagine residue within an Asn-X-Ser/Thr consensus motif in nascent polypeptide chains, the first step in protein N-glycosylation. N-glycosylation occurs cotranslationally and the complex associates with the Sec61 complex at the channel-forming translocon complex that mediates protein translocation across the endoplasmic reticulum (ER). All subunits are required for a maximal enzyme activity.</text>
</comment>
<comment type="pathway">
    <text evidence="1">Protein modification; protein glycosylation.</text>
</comment>
<comment type="subunit">
    <text evidence="1">Component of the oligosaccharyltransferase (OST) complex.</text>
</comment>
<comment type="subcellular location">
    <subcellularLocation>
        <location evidence="3">Membrane</location>
        <topology evidence="3">Multi-pass membrane protein</topology>
    </subcellularLocation>
</comment>
<comment type="similarity">
    <text evidence="3">Belongs to the OST5 family.</text>
</comment>
<protein>
    <recommendedName>
        <fullName>Dolichyl-diphosphooligosaccharide--protein glycosyltransferase subunit TMEM258</fullName>
        <shortName>Oligosaccharyl transferase subunit TMEM258</shortName>
    </recommendedName>
    <alternativeName>
        <fullName evidence="3">Transmembrane protein 258</fullName>
    </alternativeName>
</protein>
<name>TM258_CAEEL</name>
<proteinExistence type="inferred from homology"/>